<reference key="1">
    <citation type="journal article" date="2004" name="Genome Res.">
        <title>The status, quality, and expansion of the NIH full-length cDNA project: the Mammalian Gene Collection (MGC).</title>
        <authorList>
            <consortium name="The MGC Project Team"/>
        </authorList>
    </citation>
    <scope>NUCLEOTIDE SEQUENCE [LARGE SCALE MRNA]</scope>
    <source>
        <tissue>Brain</tissue>
    </source>
</reference>
<keyword id="KW-0175">Coiled coil</keyword>
<keyword id="KW-0963">Cytoplasm</keyword>
<keyword id="KW-0217">Developmental protein</keyword>
<keyword id="KW-0221">Differentiation</keyword>
<keyword id="KW-0472">Membrane</keyword>
<keyword id="KW-1267">Proteomics identification</keyword>
<keyword id="KW-1185">Reference proteome</keyword>
<keyword id="KW-0744">Spermatogenesis</keyword>
<keyword id="KW-0812">Transmembrane</keyword>
<keyword id="KW-1133">Transmembrane helix</keyword>
<protein>
    <recommendedName>
        <fullName>Spermatid maturation protein 1</fullName>
    </recommendedName>
</protein>
<gene>
    <name type="primary">SPEM1</name>
    <name type="synonym">C17orf83</name>
</gene>
<proteinExistence type="evidence at protein level"/>
<evidence type="ECO:0000250" key="1"/>
<evidence type="ECO:0000255" key="2"/>
<evidence type="ECO:0000256" key="3">
    <source>
        <dbReference type="SAM" id="MobiDB-lite"/>
    </source>
</evidence>
<evidence type="ECO:0000305" key="4"/>
<feature type="chain" id="PRO_0000307806" description="Spermatid maturation protein 1">
    <location>
        <begin position="1"/>
        <end position="309"/>
    </location>
</feature>
<feature type="transmembrane region" description="Helical" evidence="2">
    <location>
        <begin position="29"/>
        <end position="49"/>
    </location>
</feature>
<feature type="region of interest" description="Disordered" evidence="3">
    <location>
        <begin position="209"/>
        <end position="231"/>
    </location>
</feature>
<feature type="coiled-coil region" evidence="2">
    <location>
        <begin position="259"/>
        <end position="285"/>
    </location>
</feature>
<organism>
    <name type="scientific">Homo sapiens</name>
    <name type="common">Human</name>
    <dbReference type="NCBI Taxonomy" id="9606"/>
    <lineage>
        <taxon>Eukaryota</taxon>
        <taxon>Metazoa</taxon>
        <taxon>Chordata</taxon>
        <taxon>Craniata</taxon>
        <taxon>Vertebrata</taxon>
        <taxon>Euteleostomi</taxon>
        <taxon>Mammalia</taxon>
        <taxon>Eutheria</taxon>
        <taxon>Euarchontoglires</taxon>
        <taxon>Primates</taxon>
        <taxon>Haplorrhini</taxon>
        <taxon>Catarrhini</taxon>
        <taxon>Hominidae</taxon>
        <taxon>Homo</taxon>
    </lineage>
</organism>
<comment type="function">
    <text evidence="1">Required for proper cytoplasm removal during spermatogenesis.</text>
</comment>
<comment type="interaction">
    <interactant intactId="EBI-12954575">
        <id>Q8N4L4</id>
    </interactant>
    <interactant intactId="EBI-1568511">
        <id>Q13522</id>
        <label>PPP1R1A</label>
    </interactant>
    <organismsDiffer>false</organismsDiffer>
    <experiments>2</experiments>
</comment>
<comment type="subcellular location">
    <subcellularLocation>
        <location evidence="4">Membrane</location>
        <topology evidence="4">Single-pass membrane protein</topology>
    </subcellularLocation>
    <subcellularLocation>
        <location evidence="1">Cytoplasm</location>
    </subcellularLocation>
</comment>
<dbReference type="EMBL" id="BC033882">
    <property type="protein sequence ID" value="AAH33882.1"/>
    <property type="molecule type" value="mRNA"/>
</dbReference>
<dbReference type="CCDS" id="CCDS42254.1"/>
<dbReference type="RefSeq" id="NP_955371.2">
    <property type="nucleotide sequence ID" value="NM_199339.3"/>
</dbReference>
<dbReference type="BioGRID" id="131920">
    <property type="interactions" value="4"/>
</dbReference>
<dbReference type="FunCoup" id="Q8N4L4">
    <property type="interactions" value="57"/>
</dbReference>
<dbReference type="IntAct" id="Q8N4L4">
    <property type="interactions" value="2"/>
</dbReference>
<dbReference type="STRING" id="9606.ENSP00000315554"/>
<dbReference type="GlyGen" id="Q8N4L4">
    <property type="glycosylation" value="2 sites, 1 O-linked glycan (2 sites)"/>
</dbReference>
<dbReference type="iPTMnet" id="Q8N4L4"/>
<dbReference type="PhosphoSitePlus" id="Q8N4L4"/>
<dbReference type="BioMuta" id="SPEM1"/>
<dbReference type="DMDM" id="74728870"/>
<dbReference type="MassIVE" id="Q8N4L4"/>
<dbReference type="PaxDb" id="9606-ENSP00000315554"/>
<dbReference type="PeptideAtlas" id="Q8N4L4"/>
<dbReference type="ProteomicsDB" id="71940"/>
<dbReference type="Antibodypedia" id="2661">
    <property type="antibodies" value="104 antibodies from 17 providers"/>
</dbReference>
<dbReference type="DNASU" id="374768"/>
<dbReference type="Ensembl" id="ENST00000323675.4">
    <property type="protein sequence ID" value="ENSP00000315554.3"/>
    <property type="gene ID" value="ENSG00000181323.8"/>
</dbReference>
<dbReference type="Ensembl" id="ENST00000640564.2">
    <property type="protein sequence ID" value="ENSP00000492561.1"/>
    <property type="gene ID" value="ENSG00000284598.2"/>
</dbReference>
<dbReference type="GeneID" id="374768"/>
<dbReference type="KEGG" id="hsa:374768"/>
<dbReference type="MANE-Select" id="ENST00000323675.4">
    <property type="protein sequence ID" value="ENSP00000315554.3"/>
    <property type="RefSeq nucleotide sequence ID" value="NM_199339.3"/>
    <property type="RefSeq protein sequence ID" value="NP_955371.2"/>
</dbReference>
<dbReference type="UCSC" id="uc002ggv.3">
    <property type="organism name" value="human"/>
</dbReference>
<dbReference type="AGR" id="HGNC:32429"/>
<dbReference type="CTD" id="374768"/>
<dbReference type="DisGeNET" id="374768"/>
<dbReference type="GeneCards" id="SPEM1"/>
<dbReference type="HGNC" id="HGNC:32429">
    <property type="gene designation" value="SPEM1"/>
</dbReference>
<dbReference type="HPA" id="ENSG00000181323">
    <property type="expression patterns" value="Tissue enriched (testis)"/>
</dbReference>
<dbReference type="MIM" id="615116">
    <property type="type" value="gene"/>
</dbReference>
<dbReference type="neXtProt" id="NX_Q8N4L4"/>
<dbReference type="OpenTargets" id="ENSG00000181323"/>
<dbReference type="PharmGKB" id="PA162404476"/>
<dbReference type="VEuPathDB" id="HostDB:ENSG00000181323"/>
<dbReference type="eggNOG" id="ENOG502ST8J">
    <property type="taxonomic scope" value="Eukaryota"/>
</dbReference>
<dbReference type="GeneTree" id="ENSGT00510000049389"/>
<dbReference type="HOGENOM" id="CLU_078808_0_0_1"/>
<dbReference type="InParanoid" id="Q8N4L4"/>
<dbReference type="OMA" id="PAICSYH"/>
<dbReference type="OrthoDB" id="9447057at2759"/>
<dbReference type="PAN-GO" id="Q8N4L4">
    <property type="GO annotations" value="3 GO annotations based on evolutionary models"/>
</dbReference>
<dbReference type="PhylomeDB" id="Q8N4L4"/>
<dbReference type="TreeFam" id="TF338031"/>
<dbReference type="PathwayCommons" id="Q8N4L4"/>
<dbReference type="SignaLink" id="Q8N4L4"/>
<dbReference type="BioGRID-ORCS" id="374768">
    <property type="hits" value="3 hits in 1142 CRISPR screens"/>
</dbReference>
<dbReference type="GenomeRNAi" id="374768"/>
<dbReference type="Pharos" id="Q8N4L4">
    <property type="development level" value="Tdark"/>
</dbReference>
<dbReference type="PRO" id="PR:Q8N4L4"/>
<dbReference type="Proteomes" id="UP000005640">
    <property type="component" value="Chromosome 17"/>
</dbReference>
<dbReference type="RNAct" id="Q8N4L4">
    <property type="molecule type" value="protein"/>
</dbReference>
<dbReference type="Bgee" id="ENSG00000181323">
    <property type="expression patterns" value="Expressed in right testis and 26 other cell types or tissues"/>
</dbReference>
<dbReference type="GO" id="GO:0005737">
    <property type="term" value="C:cytoplasm"/>
    <property type="evidence" value="ECO:0000318"/>
    <property type="project" value="GO_Central"/>
</dbReference>
<dbReference type="GO" id="GO:0016020">
    <property type="term" value="C:membrane"/>
    <property type="evidence" value="ECO:0007669"/>
    <property type="project" value="UniProtKB-SubCell"/>
</dbReference>
<dbReference type="GO" id="GO:0030317">
    <property type="term" value="P:flagellated sperm motility"/>
    <property type="evidence" value="ECO:0000318"/>
    <property type="project" value="GO_Central"/>
</dbReference>
<dbReference type="GO" id="GO:0007291">
    <property type="term" value="P:sperm individualization"/>
    <property type="evidence" value="ECO:0000318"/>
    <property type="project" value="GO_Central"/>
</dbReference>
<dbReference type="InterPro" id="IPR031368">
    <property type="entry name" value="SPEM1_N"/>
</dbReference>
<dbReference type="PANTHER" id="PTHR34834">
    <property type="entry name" value="SPERMATID MATURATION PROTEIN 1"/>
    <property type="match status" value="1"/>
</dbReference>
<dbReference type="PANTHER" id="PTHR34834:SF1">
    <property type="entry name" value="SPERMATID MATURATION PROTEIN 1"/>
    <property type="match status" value="1"/>
</dbReference>
<dbReference type="Pfam" id="PF15670">
    <property type="entry name" value="Spem1"/>
    <property type="match status" value="1"/>
</dbReference>
<accession>Q8N4L4</accession>
<name>SPEM1_HUMAN</name>
<sequence>MAMVERPRPEWASYHNCNSNSCQDLGNSVLLLLGLIICINISINIVTLLWSRFRGVLYQVFHDTICEKEAPKSSLLRKQTQPPKKQSSPAVHLRCTMDPVMMTVSPPPAHRHRRRGSPTRCAHCPVAWAPDTDDEKPHQYPAICSYHWDVPEDWEGFQHTQGTWVPWSQDAPESPPQTIRFQPTVEERPLKTGIWSELGLRAYVYPVNPPPPSPEAPSHKNGGEGAVPEAEAAQYQPVPAPTLGPAVIPEFSRHRSSGRIVYDARDMRRRLRELTREVEALSGCYPLASGSSTAEETSKNWVYRSLTGR</sequence>